<dbReference type="EMBL" id="AAFI02000149">
    <property type="protein sequence ID" value="EAL62492.1"/>
    <property type="molecule type" value="Genomic_DNA"/>
</dbReference>
<dbReference type="RefSeq" id="XP_635966.1">
    <property type="nucleotide sequence ID" value="XM_630874.1"/>
</dbReference>
<dbReference type="SMR" id="Q54GV3"/>
<dbReference type="PaxDb" id="44689-DDB0216140"/>
<dbReference type="EnsemblProtists" id="EAL62492">
    <property type="protein sequence ID" value="EAL62492"/>
    <property type="gene ID" value="DDB_G0289959"/>
</dbReference>
<dbReference type="GeneID" id="8627381"/>
<dbReference type="KEGG" id="ddi:DDB_G0289959"/>
<dbReference type="HOGENOM" id="CLU_2817804_0_0_1"/>
<dbReference type="InParanoid" id="Q54GV3"/>
<dbReference type="PRO" id="PR:Q54GV3"/>
<dbReference type="Proteomes" id="UP000002195">
    <property type="component" value="Chromosome 5"/>
</dbReference>
<dbReference type="GO" id="GO:0016020">
    <property type="term" value="C:membrane"/>
    <property type="evidence" value="ECO:0007669"/>
    <property type="project" value="UniProtKB-SubCell"/>
</dbReference>
<comment type="subcellular location">
    <subcellularLocation>
        <location evidence="2">Membrane</location>
        <topology evidence="2">Single-pass membrane protein</topology>
    </subcellularLocation>
</comment>
<accession>Q54GV3</accession>
<keyword id="KW-0472">Membrane</keyword>
<keyword id="KW-1185">Reference proteome</keyword>
<keyword id="KW-0812">Transmembrane</keyword>
<keyword id="KW-1133">Transmembrane helix</keyword>
<reference key="1">
    <citation type="journal article" date="2005" name="Nature">
        <title>The genome of the social amoeba Dictyostelium discoideum.</title>
        <authorList>
            <person name="Eichinger L."/>
            <person name="Pachebat J.A."/>
            <person name="Gloeckner G."/>
            <person name="Rajandream M.A."/>
            <person name="Sucgang R."/>
            <person name="Berriman M."/>
            <person name="Song J."/>
            <person name="Olsen R."/>
            <person name="Szafranski K."/>
            <person name="Xu Q."/>
            <person name="Tunggal B."/>
            <person name="Kummerfeld S."/>
            <person name="Madera M."/>
            <person name="Konfortov B.A."/>
            <person name="Rivero F."/>
            <person name="Bankier A.T."/>
            <person name="Lehmann R."/>
            <person name="Hamlin N."/>
            <person name="Davies R."/>
            <person name="Gaudet P."/>
            <person name="Fey P."/>
            <person name="Pilcher K."/>
            <person name="Chen G."/>
            <person name="Saunders D."/>
            <person name="Sodergren E.J."/>
            <person name="Davis P."/>
            <person name="Kerhornou A."/>
            <person name="Nie X."/>
            <person name="Hall N."/>
            <person name="Anjard C."/>
            <person name="Hemphill L."/>
            <person name="Bason N."/>
            <person name="Farbrother P."/>
            <person name="Desany B."/>
            <person name="Just E."/>
            <person name="Morio T."/>
            <person name="Rost R."/>
            <person name="Churcher C.M."/>
            <person name="Cooper J."/>
            <person name="Haydock S."/>
            <person name="van Driessche N."/>
            <person name="Cronin A."/>
            <person name="Goodhead I."/>
            <person name="Muzny D.M."/>
            <person name="Mourier T."/>
            <person name="Pain A."/>
            <person name="Lu M."/>
            <person name="Harper D."/>
            <person name="Lindsay R."/>
            <person name="Hauser H."/>
            <person name="James K.D."/>
            <person name="Quiles M."/>
            <person name="Madan Babu M."/>
            <person name="Saito T."/>
            <person name="Buchrieser C."/>
            <person name="Wardroper A."/>
            <person name="Felder M."/>
            <person name="Thangavelu M."/>
            <person name="Johnson D."/>
            <person name="Knights A."/>
            <person name="Loulseged H."/>
            <person name="Mungall K.L."/>
            <person name="Oliver K."/>
            <person name="Price C."/>
            <person name="Quail M.A."/>
            <person name="Urushihara H."/>
            <person name="Hernandez J."/>
            <person name="Rabbinowitsch E."/>
            <person name="Steffen D."/>
            <person name="Sanders M."/>
            <person name="Ma J."/>
            <person name="Kohara Y."/>
            <person name="Sharp S."/>
            <person name="Simmonds M.N."/>
            <person name="Spiegler S."/>
            <person name="Tivey A."/>
            <person name="Sugano S."/>
            <person name="White B."/>
            <person name="Walker D."/>
            <person name="Woodward J.R."/>
            <person name="Winckler T."/>
            <person name="Tanaka Y."/>
            <person name="Shaulsky G."/>
            <person name="Schleicher M."/>
            <person name="Weinstock G.M."/>
            <person name="Rosenthal A."/>
            <person name="Cox E.C."/>
            <person name="Chisholm R.L."/>
            <person name="Gibbs R.A."/>
            <person name="Loomis W.F."/>
            <person name="Platzer M."/>
            <person name="Kay R.R."/>
            <person name="Williams J.G."/>
            <person name="Dear P.H."/>
            <person name="Noegel A.A."/>
            <person name="Barrell B.G."/>
            <person name="Kuspa A."/>
        </authorList>
    </citation>
    <scope>NUCLEOTIDE SEQUENCE [LARGE SCALE GENOMIC DNA]</scope>
    <source>
        <strain>AX4</strain>
    </source>
</reference>
<protein>
    <recommendedName>
        <fullName>Putative uncharacterized transmembrane protein DDB_G0289959</fullName>
    </recommendedName>
</protein>
<name>Y6140_DICDI</name>
<feature type="chain" id="PRO_0000346937" description="Putative uncharacterized transmembrane protein DDB_G0289959">
    <location>
        <begin position="1"/>
        <end position="67"/>
    </location>
</feature>
<feature type="transmembrane region" description="Helical" evidence="1">
    <location>
        <begin position="19"/>
        <end position="39"/>
    </location>
</feature>
<sequence length="67" mass="8492">MHIKHQAVLELLKYYKLKISFIIFFFFYFFFFYFFYGFWNLNKKKKFFYKTVKNSIGQVILRDMSNN</sequence>
<proteinExistence type="predicted"/>
<gene>
    <name type="ORF">DDB_G0289959</name>
</gene>
<evidence type="ECO:0000255" key="1"/>
<evidence type="ECO:0000305" key="2"/>
<organism>
    <name type="scientific">Dictyostelium discoideum</name>
    <name type="common">Social amoeba</name>
    <dbReference type="NCBI Taxonomy" id="44689"/>
    <lineage>
        <taxon>Eukaryota</taxon>
        <taxon>Amoebozoa</taxon>
        <taxon>Evosea</taxon>
        <taxon>Eumycetozoa</taxon>
        <taxon>Dictyostelia</taxon>
        <taxon>Dictyosteliales</taxon>
        <taxon>Dictyosteliaceae</taxon>
        <taxon>Dictyostelium</taxon>
    </lineage>
</organism>